<reference key="1">
    <citation type="journal article" date="2005" name="Genome Res.">
        <title>Comparative and functional genomic analyses of the pathogenicity of phytopathogen Xanthomonas campestris pv. campestris.</title>
        <authorList>
            <person name="Qian W."/>
            <person name="Jia Y."/>
            <person name="Ren S.-X."/>
            <person name="He Y.-Q."/>
            <person name="Feng J.-X."/>
            <person name="Lu L.-F."/>
            <person name="Sun Q."/>
            <person name="Ying G."/>
            <person name="Tang D.-J."/>
            <person name="Tang H."/>
            <person name="Wu W."/>
            <person name="Hao P."/>
            <person name="Wang L."/>
            <person name="Jiang B.-L."/>
            <person name="Zeng S."/>
            <person name="Gu W.-Y."/>
            <person name="Lu G."/>
            <person name="Rong L."/>
            <person name="Tian Y."/>
            <person name="Yao Z."/>
            <person name="Fu G."/>
            <person name="Chen B."/>
            <person name="Fang R."/>
            <person name="Qiang B."/>
            <person name="Chen Z."/>
            <person name="Zhao G.-P."/>
            <person name="Tang J.-L."/>
            <person name="He C."/>
        </authorList>
    </citation>
    <scope>NUCLEOTIDE SEQUENCE [LARGE SCALE GENOMIC DNA]</scope>
    <source>
        <strain>8004</strain>
    </source>
</reference>
<organism>
    <name type="scientific">Xanthomonas campestris pv. campestris (strain 8004)</name>
    <dbReference type="NCBI Taxonomy" id="314565"/>
    <lineage>
        <taxon>Bacteria</taxon>
        <taxon>Pseudomonadati</taxon>
        <taxon>Pseudomonadota</taxon>
        <taxon>Gammaproteobacteria</taxon>
        <taxon>Lysobacterales</taxon>
        <taxon>Lysobacteraceae</taxon>
        <taxon>Xanthomonas</taxon>
    </lineage>
</organism>
<accession>Q4UY23</accession>
<dbReference type="EC" id="2.7.2.3" evidence="1"/>
<dbReference type="EMBL" id="CP000050">
    <property type="protein sequence ID" value="AAY48050.1"/>
    <property type="molecule type" value="Genomic_DNA"/>
</dbReference>
<dbReference type="RefSeq" id="WP_011038295.1">
    <property type="nucleotide sequence ID" value="NZ_CP155948.1"/>
</dbReference>
<dbReference type="SMR" id="Q4UY23"/>
<dbReference type="KEGG" id="xcb:XC_0976"/>
<dbReference type="HOGENOM" id="CLU_025427_0_2_6"/>
<dbReference type="UniPathway" id="UPA00109">
    <property type="reaction ID" value="UER00185"/>
</dbReference>
<dbReference type="Proteomes" id="UP000000420">
    <property type="component" value="Chromosome"/>
</dbReference>
<dbReference type="GO" id="GO:0005829">
    <property type="term" value="C:cytosol"/>
    <property type="evidence" value="ECO:0007669"/>
    <property type="project" value="TreeGrafter"/>
</dbReference>
<dbReference type="GO" id="GO:0043531">
    <property type="term" value="F:ADP binding"/>
    <property type="evidence" value="ECO:0007669"/>
    <property type="project" value="TreeGrafter"/>
</dbReference>
<dbReference type="GO" id="GO:0005524">
    <property type="term" value="F:ATP binding"/>
    <property type="evidence" value="ECO:0007669"/>
    <property type="project" value="UniProtKB-KW"/>
</dbReference>
<dbReference type="GO" id="GO:0004618">
    <property type="term" value="F:phosphoglycerate kinase activity"/>
    <property type="evidence" value="ECO:0007669"/>
    <property type="project" value="UniProtKB-UniRule"/>
</dbReference>
<dbReference type="GO" id="GO:0006094">
    <property type="term" value="P:gluconeogenesis"/>
    <property type="evidence" value="ECO:0007669"/>
    <property type="project" value="TreeGrafter"/>
</dbReference>
<dbReference type="GO" id="GO:0006096">
    <property type="term" value="P:glycolytic process"/>
    <property type="evidence" value="ECO:0007669"/>
    <property type="project" value="UniProtKB-UniRule"/>
</dbReference>
<dbReference type="FunFam" id="3.40.50.1260:FF:000001">
    <property type="entry name" value="Phosphoglycerate kinase"/>
    <property type="match status" value="1"/>
</dbReference>
<dbReference type="FunFam" id="3.40.50.1260:FF:000002">
    <property type="entry name" value="Phosphoglycerate kinase"/>
    <property type="match status" value="1"/>
</dbReference>
<dbReference type="Gene3D" id="3.40.50.1260">
    <property type="entry name" value="Phosphoglycerate kinase, N-terminal domain"/>
    <property type="match status" value="2"/>
</dbReference>
<dbReference type="HAMAP" id="MF_00145">
    <property type="entry name" value="Phosphoglyc_kinase"/>
    <property type="match status" value="1"/>
</dbReference>
<dbReference type="InterPro" id="IPR001576">
    <property type="entry name" value="Phosphoglycerate_kinase"/>
</dbReference>
<dbReference type="InterPro" id="IPR015911">
    <property type="entry name" value="Phosphoglycerate_kinase_CS"/>
</dbReference>
<dbReference type="InterPro" id="IPR015824">
    <property type="entry name" value="Phosphoglycerate_kinase_N"/>
</dbReference>
<dbReference type="InterPro" id="IPR036043">
    <property type="entry name" value="Phosphoglycerate_kinase_sf"/>
</dbReference>
<dbReference type="PANTHER" id="PTHR11406">
    <property type="entry name" value="PHOSPHOGLYCERATE KINASE"/>
    <property type="match status" value="1"/>
</dbReference>
<dbReference type="PANTHER" id="PTHR11406:SF23">
    <property type="entry name" value="PHOSPHOGLYCERATE KINASE 1, CHLOROPLASTIC-RELATED"/>
    <property type="match status" value="1"/>
</dbReference>
<dbReference type="Pfam" id="PF00162">
    <property type="entry name" value="PGK"/>
    <property type="match status" value="1"/>
</dbReference>
<dbReference type="PIRSF" id="PIRSF000724">
    <property type="entry name" value="Pgk"/>
    <property type="match status" value="1"/>
</dbReference>
<dbReference type="PRINTS" id="PR00477">
    <property type="entry name" value="PHGLYCKINASE"/>
</dbReference>
<dbReference type="SUPFAM" id="SSF53748">
    <property type="entry name" value="Phosphoglycerate kinase"/>
    <property type="match status" value="1"/>
</dbReference>
<dbReference type="PROSITE" id="PS00111">
    <property type="entry name" value="PGLYCERATE_KINASE"/>
    <property type="match status" value="1"/>
</dbReference>
<comment type="catalytic activity">
    <reaction evidence="1">
        <text>(2R)-3-phosphoglycerate + ATP = (2R)-3-phospho-glyceroyl phosphate + ADP</text>
        <dbReference type="Rhea" id="RHEA:14801"/>
        <dbReference type="ChEBI" id="CHEBI:30616"/>
        <dbReference type="ChEBI" id="CHEBI:57604"/>
        <dbReference type="ChEBI" id="CHEBI:58272"/>
        <dbReference type="ChEBI" id="CHEBI:456216"/>
        <dbReference type="EC" id="2.7.2.3"/>
    </reaction>
</comment>
<comment type="pathway">
    <text evidence="1">Carbohydrate degradation; glycolysis; pyruvate from D-glyceraldehyde 3-phosphate: step 2/5.</text>
</comment>
<comment type="subunit">
    <text evidence="1">Monomer.</text>
</comment>
<comment type="subcellular location">
    <subcellularLocation>
        <location evidence="1">Cytoplasm</location>
    </subcellularLocation>
</comment>
<comment type="similarity">
    <text evidence="1">Belongs to the phosphoglycerate kinase family.</text>
</comment>
<feature type="chain" id="PRO_1000058092" description="Phosphoglycerate kinase">
    <location>
        <begin position="1"/>
        <end position="391"/>
    </location>
</feature>
<feature type="binding site" evidence="1">
    <location>
        <begin position="21"/>
        <end position="23"/>
    </location>
    <ligand>
        <name>substrate</name>
    </ligand>
</feature>
<feature type="binding site" evidence="1">
    <location>
        <position position="36"/>
    </location>
    <ligand>
        <name>substrate</name>
    </ligand>
</feature>
<feature type="binding site" evidence="1">
    <location>
        <begin position="59"/>
        <end position="62"/>
    </location>
    <ligand>
        <name>substrate</name>
    </ligand>
</feature>
<feature type="binding site" evidence="1">
    <location>
        <position position="113"/>
    </location>
    <ligand>
        <name>substrate</name>
    </ligand>
</feature>
<feature type="binding site" evidence="1">
    <location>
        <position position="146"/>
    </location>
    <ligand>
        <name>substrate</name>
    </ligand>
</feature>
<feature type="binding site" evidence="1">
    <location>
        <position position="197"/>
    </location>
    <ligand>
        <name>ATP</name>
        <dbReference type="ChEBI" id="CHEBI:30616"/>
    </ligand>
</feature>
<feature type="binding site" evidence="1">
    <location>
        <position position="319"/>
    </location>
    <ligand>
        <name>ATP</name>
        <dbReference type="ChEBI" id="CHEBI:30616"/>
    </ligand>
</feature>
<feature type="binding site" evidence="1">
    <location>
        <begin position="345"/>
        <end position="348"/>
    </location>
    <ligand>
        <name>ATP</name>
        <dbReference type="ChEBI" id="CHEBI:30616"/>
    </ligand>
</feature>
<protein>
    <recommendedName>
        <fullName evidence="1">Phosphoglycerate kinase</fullName>
        <ecNumber evidence="1">2.7.2.3</ecNumber>
    </recommendedName>
</protein>
<gene>
    <name evidence="1" type="primary">pgk</name>
    <name type="ordered locus">XC_0976</name>
</gene>
<evidence type="ECO:0000255" key="1">
    <source>
        <dbReference type="HAMAP-Rule" id="MF_00145"/>
    </source>
</evidence>
<keyword id="KW-0067">ATP-binding</keyword>
<keyword id="KW-0963">Cytoplasm</keyword>
<keyword id="KW-0324">Glycolysis</keyword>
<keyword id="KW-0418">Kinase</keyword>
<keyword id="KW-0547">Nucleotide-binding</keyword>
<keyword id="KW-0808">Transferase</keyword>
<sequence>MSIVRMTDLDLSGKRVLIRQDLNVPIDNGQITSEQRITASVPTIKLALEKGAAVMVTSHLGRPKEGTWSEEDSLAPVAARLTTLLGLDVPLVRDWVDGVDVAPGQVVLLENCRMNVGEGKDDEALARKYAALCDVFVMDAFGTAHRAQASTHGVIRFAPVAAGGPLLMAELDALAKALDNPAKPLLAIVAGSKVSTKLELLSNLVNKVDQLIVGGGIANTFIAAAGHDVGKSLSEPDLIPTANQIVADAKARGAEIPLPTDVVVAKQFLPDAEASVKSLDQVDADDLILDIGPQTAAHYAELIANAGTVVWNGPVGVFEFEPFSHGTETLARAIAASKAFSIAGGGDTLAAVDKYAIAKDVTYISTGGGAFLEFLEGKTLPAVAALEARGQ</sequence>
<name>PGK_XANC8</name>
<proteinExistence type="inferred from homology"/>